<accession>P07014</accession>
<dbReference type="EC" id="1.3.5.1"/>
<dbReference type="EMBL" id="J01619">
    <property type="protein sequence ID" value="AAA23896.1"/>
    <property type="molecule type" value="Genomic_DNA"/>
</dbReference>
<dbReference type="EMBL" id="X01070">
    <property type="protein sequence ID" value="CAA25534.1"/>
    <property type="molecule type" value="Genomic_DNA"/>
</dbReference>
<dbReference type="EMBL" id="U00096">
    <property type="protein sequence ID" value="AAC73818.1"/>
    <property type="molecule type" value="Genomic_DNA"/>
</dbReference>
<dbReference type="EMBL" id="AP009048">
    <property type="protein sequence ID" value="BAA35391.1"/>
    <property type="molecule type" value="Genomic_DNA"/>
</dbReference>
<dbReference type="EMBL" id="X00661">
    <property type="protein sequence ID" value="CAA25279.1"/>
    <property type="molecule type" value="Genomic_DNA"/>
</dbReference>
<dbReference type="PIR" id="A28837">
    <property type="entry name" value="DEECSI"/>
</dbReference>
<dbReference type="RefSeq" id="NP_415252.1">
    <property type="nucleotide sequence ID" value="NC_000913.3"/>
</dbReference>
<dbReference type="RefSeq" id="WP_001235254.1">
    <property type="nucleotide sequence ID" value="NZ_SSZK01000033.1"/>
</dbReference>
<dbReference type="PDB" id="1NEK">
    <property type="method" value="X-ray"/>
    <property type="resolution" value="2.60 A"/>
    <property type="chains" value="B=1-238"/>
</dbReference>
<dbReference type="PDB" id="1NEN">
    <property type="method" value="X-ray"/>
    <property type="resolution" value="2.90 A"/>
    <property type="chains" value="B=1-238"/>
</dbReference>
<dbReference type="PDB" id="2ACZ">
    <property type="method" value="X-ray"/>
    <property type="resolution" value="3.10 A"/>
    <property type="chains" value="B=1-238"/>
</dbReference>
<dbReference type="PDB" id="2WDQ">
    <property type="method" value="X-ray"/>
    <property type="resolution" value="2.40 A"/>
    <property type="chains" value="B/F/J=1-238"/>
</dbReference>
<dbReference type="PDB" id="2WDR">
    <property type="method" value="X-ray"/>
    <property type="resolution" value="3.20 A"/>
    <property type="chains" value="B/F/J=1-238"/>
</dbReference>
<dbReference type="PDB" id="2WDV">
    <property type="method" value="X-ray"/>
    <property type="resolution" value="3.20 A"/>
    <property type="chains" value="B/F/J=1-238"/>
</dbReference>
<dbReference type="PDB" id="2WP9">
    <property type="method" value="X-ray"/>
    <property type="resolution" value="2.70 A"/>
    <property type="chains" value="B/F/J=1-238"/>
</dbReference>
<dbReference type="PDB" id="2WS3">
    <property type="method" value="X-ray"/>
    <property type="resolution" value="3.20 A"/>
    <property type="chains" value="B/F/J=1-238"/>
</dbReference>
<dbReference type="PDB" id="2WU2">
    <property type="method" value="X-ray"/>
    <property type="resolution" value="2.50 A"/>
    <property type="chains" value="B/F/J=1-238"/>
</dbReference>
<dbReference type="PDB" id="2WU5">
    <property type="method" value="X-ray"/>
    <property type="resolution" value="2.80 A"/>
    <property type="chains" value="B/F/J=1-238"/>
</dbReference>
<dbReference type="PDB" id="6WU6">
    <property type="method" value="EM"/>
    <property type="resolution" value="3.60 A"/>
    <property type="chains" value="B/F/J=1-238"/>
</dbReference>
<dbReference type="PDB" id="7JZ2">
    <property type="method" value="EM"/>
    <property type="resolution" value="2.50 A"/>
    <property type="chains" value="B/F/J=1-238"/>
</dbReference>
<dbReference type="PDBsum" id="1NEK"/>
<dbReference type="PDBsum" id="1NEN"/>
<dbReference type="PDBsum" id="2ACZ"/>
<dbReference type="PDBsum" id="2WDQ"/>
<dbReference type="PDBsum" id="2WDR"/>
<dbReference type="PDBsum" id="2WDV"/>
<dbReference type="PDBsum" id="2WP9"/>
<dbReference type="PDBsum" id="2WS3"/>
<dbReference type="PDBsum" id="2WU2"/>
<dbReference type="PDBsum" id="2WU5"/>
<dbReference type="PDBsum" id="6WU6"/>
<dbReference type="PDBsum" id="7JZ2"/>
<dbReference type="EMDB" id="EMD-22528"/>
<dbReference type="SMR" id="P07014"/>
<dbReference type="BioGRID" id="4261950">
    <property type="interactions" value="35"/>
</dbReference>
<dbReference type="BioGRID" id="849677">
    <property type="interactions" value="4"/>
</dbReference>
<dbReference type="ComplexPortal" id="CPX-1931">
    <property type="entry name" value="Respiratory chain complex II"/>
</dbReference>
<dbReference type="DIP" id="DIP-10836N"/>
<dbReference type="FunCoup" id="P07014">
    <property type="interactions" value="726"/>
</dbReference>
<dbReference type="IntAct" id="P07014">
    <property type="interactions" value="8"/>
</dbReference>
<dbReference type="STRING" id="511145.b0724"/>
<dbReference type="DrugBank" id="DB07671">
    <property type="generic name" value="2-[1-METHYLHEXYL]-4,6-DINITROPHENOL"/>
</dbReference>
<dbReference type="DrugBank" id="DB04631">
    <property type="generic name" value="Atpenin A5"/>
</dbReference>
<dbReference type="DrugBank" id="DB08690">
    <property type="generic name" value="Ubiquinone Q2"/>
</dbReference>
<dbReference type="jPOST" id="P07014"/>
<dbReference type="PaxDb" id="511145-b0724"/>
<dbReference type="EnsemblBacteria" id="AAC73818">
    <property type="protein sequence ID" value="AAC73818"/>
    <property type="gene ID" value="b0724"/>
</dbReference>
<dbReference type="GeneID" id="945300"/>
<dbReference type="KEGG" id="ecj:JW0714"/>
<dbReference type="KEGG" id="eco:b0724"/>
<dbReference type="KEGG" id="ecoc:C3026_03625"/>
<dbReference type="PATRIC" id="fig|1411691.4.peg.1548"/>
<dbReference type="EchoBASE" id="EB0925"/>
<dbReference type="eggNOG" id="COG0479">
    <property type="taxonomic scope" value="Bacteria"/>
</dbReference>
<dbReference type="HOGENOM" id="CLU_044838_0_2_6"/>
<dbReference type="InParanoid" id="P07014"/>
<dbReference type="OMA" id="DGQYFGP"/>
<dbReference type="OrthoDB" id="9804391at2"/>
<dbReference type="PhylomeDB" id="P07014"/>
<dbReference type="BioCyc" id="EcoCyc:SDH-FE-S"/>
<dbReference type="BioCyc" id="MetaCyc:SDH-FE-S"/>
<dbReference type="UniPathway" id="UPA00223">
    <property type="reaction ID" value="UER01005"/>
</dbReference>
<dbReference type="EvolutionaryTrace" id="P07014"/>
<dbReference type="PHI-base" id="PHI:7965"/>
<dbReference type="PRO" id="PR:P07014"/>
<dbReference type="Proteomes" id="UP000000625">
    <property type="component" value="Chromosome"/>
</dbReference>
<dbReference type="GO" id="GO:0016020">
    <property type="term" value="C:membrane"/>
    <property type="evidence" value="ECO:0000303"/>
    <property type="project" value="ComplexPortal"/>
</dbReference>
<dbReference type="GO" id="GO:0005886">
    <property type="term" value="C:plasma membrane"/>
    <property type="evidence" value="ECO:0007669"/>
    <property type="project" value="UniProtKB-SubCell"/>
</dbReference>
<dbReference type="GO" id="GO:0051537">
    <property type="term" value="F:2 iron, 2 sulfur cluster binding"/>
    <property type="evidence" value="ECO:0000315"/>
    <property type="project" value="EcoCyc"/>
</dbReference>
<dbReference type="GO" id="GO:0051538">
    <property type="term" value="F:3 iron, 4 sulfur cluster binding"/>
    <property type="evidence" value="ECO:0000314"/>
    <property type="project" value="EcoCyc"/>
</dbReference>
<dbReference type="GO" id="GO:0051539">
    <property type="term" value="F:4 iron, 4 sulfur cluster binding"/>
    <property type="evidence" value="ECO:0000315"/>
    <property type="project" value="EcoCyc"/>
</dbReference>
<dbReference type="GO" id="GO:0009055">
    <property type="term" value="F:electron transfer activity"/>
    <property type="evidence" value="ECO:0000315"/>
    <property type="project" value="EcoCyc"/>
</dbReference>
<dbReference type="GO" id="GO:0051536">
    <property type="term" value="F:iron-sulfur cluster binding"/>
    <property type="evidence" value="ECO:0000314"/>
    <property type="project" value="EcoCyc"/>
</dbReference>
<dbReference type="GO" id="GO:0046872">
    <property type="term" value="F:metal ion binding"/>
    <property type="evidence" value="ECO:0007669"/>
    <property type="project" value="UniProtKB-KW"/>
</dbReference>
<dbReference type="GO" id="GO:0008177">
    <property type="term" value="F:succinate dehydrogenase (quinone) activity"/>
    <property type="evidence" value="ECO:0007669"/>
    <property type="project" value="UniProtKB-EC"/>
</dbReference>
<dbReference type="GO" id="GO:0019646">
    <property type="term" value="P:aerobic electron transport chain"/>
    <property type="evidence" value="ECO:0000303"/>
    <property type="project" value="ComplexPortal"/>
</dbReference>
<dbReference type="GO" id="GO:0009060">
    <property type="term" value="P:aerobic respiration"/>
    <property type="evidence" value="ECO:0000270"/>
    <property type="project" value="EcoCyc"/>
</dbReference>
<dbReference type="GO" id="GO:0022904">
    <property type="term" value="P:respiratory electron transport chain"/>
    <property type="evidence" value="ECO:0000318"/>
    <property type="project" value="GO_Central"/>
</dbReference>
<dbReference type="GO" id="GO:0006099">
    <property type="term" value="P:tricarboxylic acid cycle"/>
    <property type="evidence" value="ECO:0007669"/>
    <property type="project" value="UniProtKB-UniPathway"/>
</dbReference>
<dbReference type="FunFam" id="3.10.20.30:FF:000004">
    <property type="entry name" value="Succinate dehydrogenase iron-sulfur subunit"/>
    <property type="match status" value="1"/>
</dbReference>
<dbReference type="FunFam" id="1.10.1060.10:FF:000001">
    <property type="entry name" value="Succinate dehydrogenase iron-sulfur subunit SdhB"/>
    <property type="match status" value="1"/>
</dbReference>
<dbReference type="Gene3D" id="3.10.20.30">
    <property type="match status" value="1"/>
</dbReference>
<dbReference type="Gene3D" id="1.10.1060.10">
    <property type="entry name" value="Alpha-helical ferredoxin"/>
    <property type="match status" value="1"/>
</dbReference>
<dbReference type="InterPro" id="IPR036010">
    <property type="entry name" value="2Fe-2S_ferredoxin-like_sf"/>
</dbReference>
<dbReference type="InterPro" id="IPR001041">
    <property type="entry name" value="2Fe-2S_ferredoxin-type"/>
</dbReference>
<dbReference type="InterPro" id="IPR017896">
    <property type="entry name" value="4Fe4S_Fe-S-bd"/>
</dbReference>
<dbReference type="InterPro" id="IPR017900">
    <property type="entry name" value="4Fe4S_Fe_S_CS"/>
</dbReference>
<dbReference type="InterPro" id="IPR012675">
    <property type="entry name" value="Beta-grasp_dom_sf"/>
</dbReference>
<dbReference type="InterPro" id="IPR009051">
    <property type="entry name" value="Helical_ferredxn"/>
</dbReference>
<dbReference type="InterPro" id="IPR050573">
    <property type="entry name" value="SDH/FRD_Iron-Sulfur"/>
</dbReference>
<dbReference type="InterPro" id="IPR004489">
    <property type="entry name" value="Succ_DH/fum_Rdtase_Fe-S"/>
</dbReference>
<dbReference type="InterPro" id="IPR025192">
    <property type="entry name" value="Succ_DH/fum_Rdtase_N"/>
</dbReference>
<dbReference type="NCBIfam" id="TIGR00384">
    <property type="entry name" value="dhsB"/>
    <property type="match status" value="1"/>
</dbReference>
<dbReference type="NCBIfam" id="NF004616">
    <property type="entry name" value="PRK05950.1"/>
    <property type="match status" value="1"/>
</dbReference>
<dbReference type="PANTHER" id="PTHR11921:SF29">
    <property type="entry name" value="SUCCINATE DEHYDROGENASE [UBIQUINONE] IRON-SULFUR SUBUNIT, MITOCHONDRIAL"/>
    <property type="match status" value="1"/>
</dbReference>
<dbReference type="PANTHER" id="PTHR11921">
    <property type="entry name" value="SUCCINATE DEHYDROGENASE IRON-SULFUR PROTEIN"/>
    <property type="match status" value="1"/>
</dbReference>
<dbReference type="Pfam" id="PF13085">
    <property type="entry name" value="Fer2_3"/>
    <property type="match status" value="1"/>
</dbReference>
<dbReference type="Pfam" id="PF13534">
    <property type="entry name" value="Fer4_17"/>
    <property type="match status" value="1"/>
</dbReference>
<dbReference type="SUPFAM" id="SSF54292">
    <property type="entry name" value="2Fe-2S ferredoxin-like"/>
    <property type="match status" value="1"/>
</dbReference>
<dbReference type="SUPFAM" id="SSF46548">
    <property type="entry name" value="alpha-helical ferredoxin"/>
    <property type="match status" value="1"/>
</dbReference>
<dbReference type="PROSITE" id="PS51085">
    <property type="entry name" value="2FE2S_FER_2"/>
    <property type="match status" value="1"/>
</dbReference>
<dbReference type="PROSITE" id="PS00198">
    <property type="entry name" value="4FE4S_FER_1"/>
    <property type="match status" value="1"/>
</dbReference>
<dbReference type="PROSITE" id="PS51379">
    <property type="entry name" value="4FE4S_FER_2"/>
    <property type="match status" value="1"/>
</dbReference>
<proteinExistence type="evidence at protein level"/>
<keyword id="KW-0001">2Fe-2S</keyword>
<keyword id="KW-0002">3D-structure</keyword>
<keyword id="KW-0003">3Fe-4S</keyword>
<keyword id="KW-0004">4Fe-4S</keyword>
<keyword id="KW-0997">Cell inner membrane</keyword>
<keyword id="KW-1003">Cell membrane</keyword>
<keyword id="KW-0903">Direct protein sequencing</keyword>
<keyword id="KW-0249">Electron transport</keyword>
<keyword id="KW-0408">Iron</keyword>
<keyword id="KW-0411">Iron-sulfur</keyword>
<keyword id="KW-0472">Membrane</keyword>
<keyword id="KW-0479">Metal-binding</keyword>
<keyword id="KW-0560">Oxidoreductase</keyword>
<keyword id="KW-1185">Reference proteome</keyword>
<keyword id="KW-0813">Transport</keyword>
<keyword id="KW-0816">Tricarboxylic acid cycle</keyword>
<protein>
    <recommendedName>
        <fullName>Succinate dehydrogenase iron-sulfur subunit</fullName>
        <ecNumber>1.3.5.1</ecNumber>
    </recommendedName>
</protein>
<comment type="function">
    <text>Two distinct, membrane-bound, FAD-containing enzymes are responsible for the catalysis of fumarate and succinate interconversion; the fumarate reductase is used in anaerobic growth, and the succinate dehydrogenase is used in aerobic growth.</text>
</comment>
<comment type="catalytic activity">
    <reaction>
        <text>a quinone + succinate = fumarate + a quinol</text>
        <dbReference type="Rhea" id="RHEA:40523"/>
        <dbReference type="ChEBI" id="CHEBI:24646"/>
        <dbReference type="ChEBI" id="CHEBI:29806"/>
        <dbReference type="ChEBI" id="CHEBI:30031"/>
        <dbReference type="ChEBI" id="CHEBI:132124"/>
        <dbReference type="EC" id="1.3.5.1"/>
    </reaction>
</comment>
<comment type="cofactor">
    <cofactor>
        <name>[2Fe-2S] cluster</name>
        <dbReference type="ChEBI" id="CHEBI:190135"/>
    </cofactor>
    <text>Binds 1 [2Fe-2S] cluster.</text>
</comment>
<comment type="cofactor">
    <cofactor>
        <name>[3Fe-4S] cluster</name>
        <dbReference type="ChEBI" id="CHEBI:21137"/>
    </cofactor>
    <text>Binds 1 [3Fe-4S] cluster.</text>
</comment>
<comment type="cofactor">
    <cofactor>
        <name>[4Fe-4S] cluster</name>
        <dbReference type="ChEBI" id="CHEBI:49883"/>
    </cofactor>
    <text>Binds 1 [4Fe-4S] cluster.</text>
</comment>
<comment type="pathway">
    <text>Carbohydrate metabolism; tricarboxylic acid cycle; fumarate from succinate (bacterial route): step 1/1.</text>
</comment>
<comment type="subunit">
    <text evidence="3 4 5 6">Part of an enzyme complex containing four subunits: a flavoprotein, an iron-sulfur, cytochrome b-556, and a hydrophobic anchor protein. The complex forms trimers.</text>
</comment>
<comment type="interaction">
    <interactant intactId="EBI-1035514">
        <id>P07014</id>
    </interactant>
    <interactant intactId="EBI-371263">
        <id>P0AC41</id>
        <label>sdhA</label>
    </interactant>
    <organismsDiffer>false</organismsDiffer>
    <experiments>2</experiments>
</comment>
<comment type="subcellular location">
    <subcellularLocation>
        <location evidence="4">Cell inner membrane</location>
        <topology evidence="4">Peripheral membrane protein</topology>
    </subcellularLocation>
</comment>
<comment type="similarity">
    <text evidence="7">Belongs to the succinate dehydrogenase/fumarate reductase iron-sulfur protein family.</text>
</comment>
<reference key="1">
    <citation type="journal article" date="1984" name="Biochem. J.">
        <title>Nucleotide sequence encoding the iron-sulphur protein subunit of the succinate dehydrogenase of Escherichia coli.</title>
        <authorList>
            <person name="Darlison M.G."/>
            <person name="Guest J.R."/>
        </authorList>
    </citation>
    <scope>NUCLEOTIDE SEQUENCE [GENOMIC DNA]</scope>
    <source>
        <strain>K12</strain>
    </source>
</reference>
<reference key="2">
    <citation type="journal article" date="1996" name="DNA Res.">
        <title>A 718-kb DNA sequence of the Escherichia coli K-12 genome corresponding to the 12.7-28.0 min region on the linkage map.</title>
        <authorList>
            <person name="Oshima T."/>
            <person name="Aiba H."/>
            <person name="Baba T."/>
            <person name="Fujita K."/>
            <person name="Hayashi K."/>
            <person name="Honjo A."/>
            <person name="Ikemoto K."/>
            <person name="Inada T."/>
            <person name="Itoh T."/>
            <person name="Kajihara M."/>
            <person name="Kanai K."/>
            <person name="Kashimoto K."/>
            <person name="Kimura S."/>
            <person name="Kitagawa M."/>
            <person name="Makino K."/>
            <person name="Masuda S."/>
            <person name="Miki T."/>
            <person name="Mizobuchi K."/>
            <person name="Mori H."/>
            <person name="Motomura K."/>
            <person name="Nakamura Y."/>
            <person name="Nashimoto H."/>
            <person name="Nishio Y."/>
            <person name="Saito N."/>
            <person name="Sampei G."/>
            <person name="Seki Y."/>
            <person name="Tagami H."/>
            <person name="Takemoto K."/>
            <person name="Wada C."/>
            <person name="Yamamoto Y."/>
            <person name="Yano M."/>
            <person name="Horiuchi T."/>
        </authorList>
    </citation>
    <scope>NUCLEOTIDE SEQUENCE [LARGE SCALE GENOMIC DNA]</scope>
    <source>
        <strain>K12 / W3110 / ATCC 27325 / DSM 5911</strain>
    </source>
</reference>
<reference key="3">
    <citation type="journal article" date="1997" name="Science">
        <title>The complete genome sequence of Escherichia coli K-12.</title>
        <authorList>
            <person name="Blattner F.R."/>
            <person name="Plunkett G. III"/>
            <person name="Bloch C.A."/>
            <person name="Perna N.T."/>
            <person name="Burland V."/>
            <person name="Riley M."/>
            <person name="Collado-Vides J."/>
            <person name="Glasner J.D."/>
            <person name="Rode C.K."/>
            <person name="Mayhew G.F."/>
            <person name="Gregor J."/>
            <person name="Davis N.W."/>
            <person name="Kirkpatrick H.A."/>
            <person name="Goeden M.A."/>
            <person name="Rose D.J."/>
            <person name="Mau B."/>
            <person name="Shao Y."/>
        </authorList>
    </citation>
    <scope>NUCLEOTIDE SEQUENCE [LARGE SCALE GENOMIC DNA]</scope>
    <source>
        <strain>K12 / MG1655 / ATCC 47076</strain>
    </source>
</reference>
<reference key="4">
    <citation type="journal article" date="2006" name="Mol. Syst. Biol.">
        <title>Highly accurate genome sequences of Escherichia coli K-12 strains MG1655 and W3110.</title>
        <authorList>
            <person name="Hayashi K."/>
            <person name="Morooka N."/>
            <person name="Yamamoto Y."/>
            <person name="Fujita K."/>
            <person name="Isono K."/>
            <person name="Choi S."/>
            <person name="Ohtsubo E."/>
            <person name="Baba T."/>
            <person name="Wanner B.L."/>
            <person name="Mori H."/>
            <person name="Horiuchi T."/>
        </authorList>
    </citation>
    <scope>NUCLEOTIDE SEQUENCE [LARGE SCALE GENOMIC DNA]</scope>
    <source>
        <strain>K12 / W3110 / ATCC 27325 / DSM 5911</strain>
    </source>
</reference>
<reference key="5">
    <citation type="journal article" date="1984" name="Eur. J. Biochem.">
        <title>Nucleotide sequence of the sucA gene encoding the 2-oxoglutarate dehydrogenase of Escherichia coli K12.</title>
        <authorList>
            <person name="Darlison M.G."/>
            <person name="Spencer M.E."/>
            <person name="Guest J.R."/>
        </authorList>
    </citation>
    <scope>NUCLEOTIDE SEQUENCE [GENOMIC DNA] OF 231-238</scope>
</reference>
<reference key="6">
    <citation type="journal article" date="1997" name="Electrophoresis">
        <title>Comparing the predicted and observed properties of proteins encoded in the genome of Escherichia coli K-12.</title>
        <authorList>
            <person name="Link A.J."/>
            <person name="Robison K."/>
            <person name="Church G.M."/>
        </authorList>
    </citation>
    <scope>PROTEIN SEQUENCE OF 1-11</scope>
    <source>
        <strain>K12 / EMG2</strain>
    </source>
</reference>
<reference key="7">
    <citation type="journal article" date="2005" name="J. Biol. Chem.">
        <title>Protein complexes of the Escherichia coli cell envelope.</title>
        <authorList>
            <person name="Stenberg F."/>
            <person name="Chovanec P."/>
            <person name="Maslen S.L."/>
            <person name="Robinson C.V."/>
            <person name="Ilag L."/>
            <person name="von Heijne G."/>
            <person name="Daley D.O."/>
        </authorList>
    </citation>
    <scope>SUBUNIT</scope>
    <scope>SUBCELLULAR LOCATION</scope>
    <source>
        <strain>BL21-DE3</strain>
    </source>
</reference>
<reference key="8">
    <citation type="journal article" date="2003" name="Science">
        <title>Architecture of succinate dehydrogenase and reactive oxygen species generation.</title>
        <authorList>
            <person name="Yankovskaya V."/>
            <person name="Horsefield R."/>
            <person name="Toernroth S."/>
            <person name="Luna-Chavez C."/>
            <person name="Miyoshi H."/>
            <person name="Leger C."/>
            <person name="Byrne B."/>
            <person name="Cecchini G."/>
            <person name="Iwata S."/>
        </authorList>
    </citation>
    <scope>X-RAY CRYSTALLOGRAPHY (2.6 ANGSTROMS) IN COMPLEX WITH IRON-SULFUR CLUSTERS AND UBIQUINONE</scope>
    <scope>COFACTOR</scope>
    <scope>SUBUNIT</scope>
</reference>
<reference key="9">
    <citation type="journal article" date="2006" name="J. Biol. Chem.">
        <title>Structural and computational analysis of the quinone-binding site of complex II (succinate-ubiquinone oxidoreductase): a mechanism of electron transfer and proton conduction during ubiquinone reduction.</title>
        <authorList>
            <person name="Horsefield R."/>
            <person name="Yankovskaya V."/>
            <person name="Sexton G."/>
            <person name="Whittingham W."/>
            <person name="Shiomi K."/>
            <person name="Omura S."/>
            <person name="Byrne B."/>
            <person name="Cecchini G."/>
            <person name="Iwata S."/>
        </authorList>
    </citation>
    <scope>X-RAY CRYSTALLOGRAPHY (3.1 ANGSTROMS) IN COMPLEX WITH IRON-SULFUR CLUSTERS</scope>
    <scope>COFACTOR</scope>
    <scope>SUBUNIT</scope>
</reference>
<reference key="10">
    <citation type="journal article" date="2009" name="J. Biol. Chem.">
        <title>Structure of Escherichia coli succinate:quinone oxidoreductase with an occupied and empty quinone-binding site.</title>
        <authorList>
            <person name="Ruprecht J."/>
            <person name="Yankovskaya V."/>
            <person name="Maklashina E."/>
            <person name="Iwata S."/>
            <person name="Cecchini G."/>
        </authorList>
    </citation>
    <scope>X-RAY CRYSTALLOGRAPHY (2.4 ANGSTROMS) IN COMPLEX WITH IRON-SULFUR CLUSTERS</scope>
    <scope>COFACTOR</scope>
    <scope>SUBUNIT</scope>
</reference>
<evidence type="ECO:0000255" key="1">
    <source>
        <dbReference type="PROSITE-ProRule" id="PRU00465"/>
    </source>
</evidence>
<evidence type="ECO:0000255" key="2">
    <source>
        <dbReference type="PROSITE-ProRule" id="PRU00711"/>
    </source>
</evidence>
<evidence type="ECO:0000269" key="3">
    <source>
    </source>
</evidence>
<evidence type="ECO:0000269" key="4">
    <source>
    </source>
</evidence>
<evidence type="ECO:0000269" key="5">
    <source>
    </source>
</evidence>
<evidence type="ECO:0000269" key="6">
    <source>
    </source>
</evidence>
<evidence type="ECO:0000305" key="7"/>
<evidence type="ECO:0007829" key="8">
    <source>
        <dbReference type="PDB" id="2ACZ"/>
    </source>
</evidence>
<evidence type="ECO:0007829" key="9">
    <source>
        <dbReference type="PDB" id="2WDQ"/>
    </source>
</evidence>
<evidence type="ECO:0007829" key="10">
    <source>
        <dbReference type="PDB" id="7JZ2"/>
    </source>
</evidence>
<sequence>MRLEFSIYRYNPDVDDAPRMQDYTLEADEGRDMMLLDALIQLKEKDPSLSFRRSCREGVCGSDGLNMNGKNGLACITPISALNQPGKKIVIRPLPGLPVIRDLVVDMGQFYAQYEKIKPYLLNNGQNPPAREHLQMPEQREKLDGLYECILCACCSTSCPSFWWNPDKFIGPAGLLAAYRFLIDSRDTETDSRLDGLSDAFSVFRCHSIMNCVSVCPKGLNPTRAIGHIKSMLLQRNA</sequence>
<name>SDHB_ECOLI</name>
<organism>
    <name type="scientific">Escherichia coli (strain K12)</name>
    <dbReference type="NCBI Taxonomy" id="83333"/>
    <lineage>
        <taxon>Bacteria</taxon>
        <taxon>Pseudomonadati</taxon>
        <taxon>Pseudomonadota</taxon>
        <taxon>Gammaproteobacteria</taxon>
        <taxon>Enterobacterales</taxon>
        <taxon>Enterobacteriaceae</taxon>
        <taxon>Escherichia</taxon>
    </lineage>
</organism>
<gene>
    <name type="primary">sdhB</name>
    <name type="ordered locus">b0724</name>
    <name type="ordered locus">JW0714</name>
</gene>
<feature type="chain" id="PRO_0000158688" description="Succinate dehydrogenase iron-sulfur subunit">
    <location>
        <begin position="1"/>
        <end position="238"/>
    </location>
</feature>
<feature type="domain" description="2Fe-2S ferredoxin-type" evidence="1">
    <location>
        <begin position="8"/>
        <end position="97"/>
    </location>
</feature>
<feature type="domain" description="4Fe-4S ferredoxin-type" evidence="2">
    <location>
        <begin position="139"/>
        <end position="169"/>
    </location>
</feature>
<feature type="binding site">
    <location>
        <position position="55"/>
    </location>
    <ligand>
        <name>[2Fe-2S] cluster</name>
        <dbReference type="ChEBI" id="CHEBI:190135"/>
    </ligand>
</feature>
<feature type="binding site">
    <location>
        <position position="60"/>
    </location>
    <ligand>
        <name>[2Fe-2S] cluster</name>
        <dbReference type="ChEBI" id="CHEBI:190135"/>
    </ligand>
</feature>
<feature type="binding site">
    <location>
        <position position="75"/>
    </location>
    <ligand>
        <name>[2Fe-2S] cluster</name>
        <dbReference type="ChEBI" id="CHEBI:190135"/>
    </ligand>
</feature>
<feature type="binding site">
    <location>
        <position position="149"/>
    </location>
    <ligand>
        <name>[4Fe-4S] cluster</name>
        <dbReference type="ChEBI" id="CHEBI:49883"/>
    </ligand>
</feature>
<feature type="binding site">
    <location>
        <position position="152"/>
    </location>
    <ligand>
        <name>[4Fe-4S] cluster</name>
        <dbReference type="ChEBI" id="CHEBI:49883"/>
    </ligand>
</feature>
<feature type="binding site">
    <location>
        <position position="155"/>
    </location>
    <ligand>
        <name>[4Fe-4S] cluster</name>
        <dbReference type="ChEBI" id="CHEBI:49883"/>
    </ligand>
</feature>
<feature type="binding site">
    <location>
        <position position="159"/>
    </location>
    <ligand>
        <name>[3Fe-4S] cluster</name>
        <dbReference type="ChEBI" id="CHEBI:21137"/>
    </ligand>
</feature>
<feature type="binding site" evidence="3">
    <location>
        <position position="164"/>
    </location>
    <ligand>
        <name>a ubiquinone</name>
        <dbReference type="ChEBI" id="CHEBI:16389"/>
        <note>ligand shared with SdhD subunit</note>
    </ligand>
</feature>
<feature type="binding site">
    <location>
        <position position="206"/>
    </location>
    <ligand>
        <name>[3Fe-4S] cluster</name>
        <dbReference type="ChEBI" id="CHEBI:21137"/>
    </ligand>
</feature>
<feature type="binding site">
    <location>
        <position position="212"/>
    </location>
    <ligand>
        <name>[3Fe-4S] cluster</name>
        <dbReference type="ChEBI" id="CHEBI:21137"/>
    </ligand>
</feature>
<feature type="binding site">
    <location>
        <position position="216"/>
    </location>
    <ligand>
        <name>[4Fe-4S] cluster</name>
        <dbReference type="ChEBI" id="CHEBI:49883"/>
    </ligand>
</feature>
<feature type="strand" evidence="9">
    <location>
        <begin position="2"/>
        <end position="9"/>
    </location>
</feature>
<feature type="turn" evidence="9">
    <location>
        <begin position="12"/>
        <end position="14"/>
    </location>
</feature>
<feature type="strand" evidence="9">
    <location>
        <begin position="19"/>
        <end position="26"/>
    </location>
</feature>
<feature type="strand" evidence="10">
    <location>
        <begin position="29"/>
        <end position="31"/>
    </location>
</feature>
<feature type="helix" evidence="9">
    <location>
        <begin position="35"/>
        <end position="45"/>
    </location>
</feature>
<feature type="strand" evidence="9">
    <location>
        <begin position="54"/>
        <end position="60"/>
    </location>
</feature>
<feature type="strand" evidence="9">
    <location>
        <begin position="64"/>
        <end position="67"/>
    </location>
</feature>
<feature type="strand" evidence="9">
    <location>
        <begin position="70"/>
        <end position="73"/>
    </location>
</feature>
<feature type="helix" evidence="9">
    <location>
        <begin position="74"/>
        <end position="76"/>
    </location>
</feature>
<feature type="helix" evidence="9">
    <location>
        <begin position="79"/>
        <end position="81"/>
    </location>
</feature>
<feature type="strand" evidence="9">
    <location>
        <begin position="89"/>
        <end position="92"/>
    </location>
</feature>
<feature type="strand" evidence="9">
    <location>
        <begin position="97"/>
        <end position="101"/>
    </location>
</feature>
<feature type="strand" evidence="8">
    <location>
        <begin position="103"/>
        <end position="105"/>
    </location>
</feature>
<feature type="helix" evidence="9">
    <location>
        <begin position="108"/>
        <end position="116"/>
    </location>
</feature>
<feature type="strand" evidence="10">
    <location>
        <begin position="125"/>
        <end position="127"/>
    </location>
</feature>
<feature type="strand" evidence="9">
    <location>
        <begin position="130"/>
        <end position="132"/>
    </location>
</feature>
<feature type="helix" evidence="9">
    <location>
        <begin position="137"/>
        <end position="141"/>
    </location>
</feature>
<feature type="turn" evidence="9">
    <location>
        <begin position="142"/>
        <end position="148"/>
    </location>
</feature>
<feature type="helix" evidence="9">
    <location>
        <begin position="156"/>
        <end position="158"/>
    </location>
</feature>
<feature type="helix" evidence="9">
    <location>
        <begin position="160"/>
        <end position="164"/>
    </location>
</feature>
<feature type="turn" evidence="9">
    <location>
        <begin position="166"/>
        <end position="168"/>
    </location>
</feature>
<feature type="helix" evidence="9">
    <location>
        <begin position="172"/>
        <end position="182"/>
    </location>
</feature>
<feature type="helix" evidence="9">
    <location>
        <begin position="190"/>
        <end position="195"/>
    </location>
</feature>
<feature type="turn" evidence="9">
    <location>
        <begin position="200"/>
        <end position="205"/>
    </location>
</feature>
<feature type="helix" evidence="9">
    <location>
        <begin position="211"/>
        <end position="215"/>
    </location>
</feature>
<feature type="helix" evidence="9">
    <location>
        <begin position="222"/>
        <end position="237"/>
    </location>
</feature>